<keyword id="KW-0413">Isomerase</keyword>
<keyword id="KW-1185">Reference proteome</keyword>
<gene>
    <name evidence="1" type="primary">rpiA</name>
    <name type="ordered locus">Bpro_2857</name>
</gene>
<protein>
    <recommendedName>
        <fullName evidence="1">Ribose-5-phosphate isomerase A</fullName>
        <ecNumber evidence="1">5.3.1.6</ecNumber>
    </recommendedName>
    <alternativeName>
        <fullName evidence="1">Phosphoriboisomerase A</fullName>
        <shortName evidence="1">PRI</shortName>
    </alternativeName>
</protein>
<evidence type="ECO:0000255" key="1">
    <source>
        <dbReference type="HAMAP-Rule" id="MF_00170"/>
    </source>
</evidence>
<dbReference type="EC" id="5.3.1.6" evidence="1"/>
<dbReference type="EMBL" id="CP000316">
    <property type="protein sequence ID" value="ABE44772.1"/>
    <property type="molecule type" value="Genomic_DNA"/>
</dbReference>
<dbReference type="SMR" id="Q129M0"/>
<dbReference type="STRING" id="296591.Bpro_2857"/>
<dbReference type="KEGG" id="pol:Bpro_2857"/>
<dbReference type="eggNOG" id="COG0120">
    <property type="taxonomic scope" value="Bacteria"/>
</dbReference>
<dbReference type="HOGENOM" id="CLU_056590_1_1_4"/>
<dbReference type="UniPathway" id="UPA00115">
    <property type="reaction ID" value="UER00412"/>
</dbReference>
<dbReference type="Proteomes" id="UP000001983">
    <property type="component" value="Chromosome"/>
</dbReference>
<dbReference type="GO" id="GO:0005829">
    <property type="term" value="C:cytosol"/>
    <property type="evidence" value="ECO:0007669"/>
    <property type="project" value="TreeGrafter"/>
</dbReference>
<dbReference type="GO" id="GO:0004751">
    <property type="term" value="F:ribose-5-phosphate isomerase activity"/>
    <property type="evidence" value="ECO:0007669"/>
    <property type="project" value="UniProtKB-UniRule"/>
</dbReference>
<dbReference type="GO" id="GO:0006014">
    <property type="term" value="P:D-ribose metabolic process"/>
    <property type="evidence" value="ECO:0007669"/>
    <property type="project" value="TreeGrafter"/>
</dbReference>
<dbReference type="GO" id="GO:0009052">
    <property type="term" value="P:pentose-phosphate shunt, non-oxidative branch"/>
    <property type="evidence" value="ECO:0007669"/>
    <property type="project" value="UniProtKB-UniRule"/>
</dbReference>
<dbReference type="CDD" id="cd01398">
    <property type="entry name" value="RPI_A"/>
    <property type="match status" value="1"/>
</dbReference>
<dbReference type="FunFam" id="3.40.50.1360:FF:000001">
    <property type="entry name" value="Ribose-5-phosphate isomerase A"/>
    <property type="match status" value="1"/>
</dbReference>
<dbReference type="Gene3D" id="3.30.70.260">
    <property type="match status" value="1"/>
</dbReference>
<dbReference type="Gene3D" id="3.40.50.1360">
    <property type="match status" value="1"/>
</dbReference>
<dbReference type="HAMAP" id="MF_00170">
    <property type="entry name" value="Rib_5P_isom_A"/>
    <property type="match status" value="1"/>
</dbReference>
<dbReference type="InterPro" id="IPR037171">
    <property type="entry name" value="NagB/RpiA_transferase-like"/>
</dbReference>
<dbReference type="InterPro" id="IPR020672">
    <property type="entry name" value="Ribose5P_isomerase_typA_subgr"/>
</dbReference>
<dbReference type="InterPro" id="IPR004788">
    <property type="entry name" value="Ribose5P_isomerase_type_A"/>
</dbReference>
<dbReference type="NCBIfam" id="NF001924">
    <property type="entry name" value="PRK00702.1"/>
    <property type="match status" value="1"/>
</dbReference>
<dbReference type="NCBIfam" id="TIGR00021">
    <property type="entry name" value="rpiA"/>
    <property type="match status" value="1"/>
</dbReference>
<dbReference type="PANTHER" id="PTHR11934">
    <property type="entry name" value="RIBOSE-5-PHOSPHATE ISOMERASE"/>
    <property type="match status" value="1"/>
</dbReference>
<dbReference type="PANTHER" id="PTHR11934:SF0">
    <property type="entry name" value="RIBOSE-5-PHOSPHATE ISOMERASE"/>
    <property type="match status" value="1"/>
</dbReference>
<dbReference type="Pfam" id="PF06026">
    <property type="entry name" value="Rib_5-P_isom_A"/>
    <property type="match status" value="1"/>
</dbReference>
<dbReference type="SUPFAM" id="SSF75445">
    <property type="entry name" value="D-ribose-5-phosphate isomerase (RpiA), lid domain"/>
    <property type="match status" value="1"/>
</dbReference>
<dbReference type="SUPFAM" id="SSF100950">
    <property type="entry name" value="NagB/RpiA/CoA transferase-like"/>
    <property type="match status" value="1"/>
</dbReference>
<feature type="chain" id="PRO_1000097681" description="Ribose-5-phosphate isomerase A">
    <location>
        <begin position="1"/>
        <end position="240"/>
    </location>
</feature>
<feature type="active site" description="Proton acceptor" evidence="1">
    <location>
        <position position="116"/>
    </location>
</feature>
<feature type="binding site" evidence="1">
    <location>
        <begin position="41"/>
        <end position="44"/>
    </location>
    <ligand>
        <name>substrate</name>
    </ligand>
</feature>
<feature type="binding site" evidence="1">
    <location>
        <begin position="94"/>
        <end position="97"/>
    </location>
    <ligand>
        <name>substrate</name>
    </ligand>
</feature>
<feature type="binding site" evidence="1">
    <location>
        <begin position="107"/>
        <end position="110"/>
    </location>
    <ligand>
        <name>substrate</name>
    </ligand>
</feature>
<feature type="binding site" evidence="1">
    <location>
        <position position="134"/>
    </location>
    <ligand>
        <name>substrate</name>
    </ligand>
</feature>
<reference key="1">
    <citation type="journal article" date="2008" name="Appl. Environ. Microbiol.">
        <title>The genome of Polaromonas sp. strain JS666: insights into the evolution of a hydrocarbon- and xenobiotic-degrading bacterium, and features of relevance to biotechnology.</title>
        <authorList>
            <person name="Mattes T.E."/>
            <person name="Alexander A.K."/>
            <person name="Richardson P.M."/>
            <person name="Munk A.C."/>
            <person name="Han C.S."/>
            <person name="Stothard P."/>
            <person name="Coleman N.V."/>
        </authorList>
    </citation>
    <scope>NUCLEOTIDE SEQUENCE [LARGE SCALE GENOMIC DNA]</scope>
    <source>
        <strain>JS666 / ATCC BAA-500</strain>
    </source>
</reference>
<sequence length="240" mass="25197">MSQKPTSHPYKPNMTQDELKALVGQAALPYVEPGSIVGVGTGSTVNKFIDALATMKDRIAGAVSSSVASTERLQAIGIKVFDATEVDELAVYIDGADEIDHAGYMIKGGGAALTREKIVAAQSRKFVCIADESKLVQTLGSFPLPVEVIPMAARRIARQFAALGGTATLRSKGGAESGEPLVTDNGQHILDVTGLKITDPLGFESQVNQWPGVVTVGVFAFQKAHVCLLGASDGVRTLVF</sequence>
<comment type="function">
    <text evidence="1">Catalyzes the reversible conversion of ribose-5-phosphate to ribulose 5-phosphate.</text>
</comment>
<comment type="catalytic activity">
    <reaction evidence="1">
        <text>aldehydo-D-ribose 5-phosphate = D-ribulose 5-phosphate</text>
        <dbReference type="Rhea" id="RHEA:14657"/>
        <dbReference type="ChEBI" id="CHEBI:58121"/>
        <dbReference type="ChEBI" id="CHEBI:58273"/>
        <dbReference type="EC" id="5.3.1.6"/>
    </reaction>
</comment>
<comment type="pathway">
    <text evidence="1">Carbohydrate degradation; pentose phosphate pathway; D-ribose 5-phosphate from D-ribulose 5-phosphate (non-oxidative stage): step 1/1.</text>
</comment>
<comment type="subunit">
    <text evidence="1">Homodimer.</text>
</comment>
<comment type="similarity">
    <text evidence="1">Belongs to the ribose 5-phosphate isomerase family.</text>
</comment>
<name>RPIA_POLSJ</name>
<organism>
    <name type="scientific">Polaromonas sp. (strain JS666 / ATCC BAA-500)</name>
    <dbReference type="NCBI Taxonomy" id="296591"/>
    <lineage>
        <taxon>Bacteria</taxon>
        <taxon>Pseudomonadati</taxon>
        <taxon>Pseudomonadota</taxon>
        <taxon>Betaproteobacteria</taxon>
        <taxon>Burkholderiales</taxon>
        <taxon>Comamonadaceae</taxon>
        <taxon>Polaromonas</taxon>
    </lineage>
</organism>
<accession>Q129M0</accession>
<proteinExistence type="inferred from homology"/>